<name>PSBK_WHEAT</name>
<dbReference type="EMBL" id="AB042240">
    <property type="protein sequence ID" value="BAB47017.1"/>
    <property type="molecule type" value="Genomic_DNA"/>
</dbReference>
<dbReference type="RefSeq" id="NP_114242.1">
    <property type="nucleotide sequence ID" value="NC_002762.1"/>
</dbReference>
<dbReference type="SMR" id="P58273"/>
<dbReference type="STRING" id="4565.P58273"/>
<dbReference type="PaxDb" id="4565-EPlTAEP00000010016"/>
<dbReference type="GeneID" id="803206"/>
<dbReference type="KEGG" id="taes:803206"/>
<dbReference type="eggNOG" id="ENOG502SAFC">
    <property type="taxonomic scope" value="Eukaryota"/>
</dbReference>
<dbReference type="Proteomes" id="UP000019116">
    <property type="component" value="Chloroplast"/>
</dbReference>
<dbReference type="ExpressionAtlas" id="P58273">
    <property type="expression patterns" value="baseline"/>
</dbReference>
<dbReference type="GO" id="GO:0009535">
    <property type="term" value="C:chloroplast thylakoid membrane"/>
    <property type="evidence" value="ECO:0007669"/>
    <property type="project" value="UniProtKB-SubCell"/>
</dbReference>
<dbReference type="GO" id="GO:0009539">
    <property type="term" value="C:photosystem II reaction center"/>
    <property type="evidence" value="ECO:0007669"/>
    <property type="project" value="InterPro"/>
</dbReference>
<dbReference type="GO" id="GO:0015979">
    <property type="term" value="P:photosynthesis"/>
    <property type="evidence" value="ECO:0007669"/>
    <property type="project" value="UniProtKB-UniRule"/>
</dbReference>
<dbReference type="HAMAP" id="MF_00441">
    <property type="entry name" value="PSII_PsbK"/>
    <property type="match status" value="1"/>
</dbReference>
<dbReference type="InterPro" id="IPR003687">
    <property type="entry name" value="PSII_PsbK"/>
</dbReference>
<dbReference type="InterPro" id="IPR037270">
    <property type="entry name" value="PSII_PsbK_sf"/>
</dbReference>
<dbReference type="NCBIfam" id="NF002715">
    <property type="entry name" value="PRK02553.1"/>
    <property type="match status" value="1"/>
</dbReference>
<dbReference type="PANTHER" id="PTHR35325">
    <property type="match status" value="1"/>
</dbReference>
<dbReference type="PANTHER" id="PTHR35325:SF1">
    <property type="entry name" value="PHOTOSYSTEM II REACTION CENTER PROTEIN K"/>
    <property type="match status" value="1"/>
</dbReference>
<dbReference type="Pfam" id="PF02533">
    <property type="entry name" value="PsbK"/>
    <property type="match status" value="1"/>
</dbReference>
<dbReference type="SUPFAM" id="SSF161037">
    <property type="entry name" value="Photosystem II reaction center protein K, PsbK"/>
    <property type="match status" value="1"/>
</dbReference>
<sequence length="61" mass="7030">MPNILSLTCICFNSVIYPTSFFFAKLPEAYAIFNPIVDFMPVIPLFFFLLAFVWQAAVSFR</sequence>
<accession>P58273</accession>
<protein>
    <recommendedName>
        <fullName evidence="1">Photosystem II reaction center protein K</fullName>
        <shortName evidence="1">PSII-K</shortName>
    </recommendedName>
</protein>
<reference key="1">
    <citation type="journal article" date="2000" name="Plant Mol. Biol. Rep.">
        <title>Chinese spring wheat (Triticum aestivum L.) chloroplast genome: complete sequence and contig clones.</title>
        <authorList>
            <person name="Ogihara Y."/>
            <person name="Isono K."/>
            <person name="Kojima T."/>
            <person name="Endo A."/>
            <person name="Hanaoka M."/>
            <person name="Shiina T."/>
            <person name="Terachi T."/>
            <person name="Utsugi S."/>
            <person name="Murata M."/>
            <person name="Mori N."/>
            <person name="Takumi S."/>
            <person name="Ikeo K."/>
            <person name="Gojobori T."/>
            <person name="Murai R."/>
            <person name="Murai K."/>
            <person name="Matsuoka Y."/>
            <person name="Ohnishi Y."/>
            <person name="Tajiri H."/>
            <person name="Tsunewaki K."/>
        </authorList>
    </citation>
    <scope>NUCLEOTIDE SEQUENCE [LARGE SCALE GENOMIC DNA]</scope>
    <source>
        <strain>cv. Chinese Spring</strain>
    </source>
</reference>
<proteinExistence type="inferred from homology"/>
<geneLocation type="chloroplast"/>
<gene>
    <name evidence="1" type="primary">psbK</name>
</gene>
<evidence type="ECO:0000255" key="1">
    <source>
        <dbReference type="HAMAP-Rule" id="MF_00441"/>
    </source>
</evidence>
<comment type="function">
    <text evidence="1">One of the components of the core complex of photosystem II (PSII). PSII is a light-driven water:plastoquinone oxidoreductase that uses light energy to abstract electrons from H(2)O, generating O(2) and a proton gradient subsequently used for ATP formation. It consists of a core antenna complex that captures photons, and an electron transfer chain that converts photonic excitation into a charge separation.</text>
</comment>
<comment type="subunit">
    <text evidence="1">PSII is composed of 1 copy each of membrane proteins PsbA, PsbB, PsbC, PsbD, PsbE, PsbF, PsbH, PsbI, PsbJ, PsbK, PsbL, PsbM, PsbT, PsbX, PsbY, PsbZ, Psb30/Ycf12, at least 3 peripheral proteins of the oxygen-evolving complex and a large number of cofactors. It forms dimeric complexes.</text>
</comment>
<comment type="subcellular location">
    <subcellularLocation>
        <location evidence="1">Plastid</location>
        <location evidence="1">Chloroplast thylakoid membrane</location>
        <topology evidence="1">Single-pass membrane protein</topology>
    </subcellularLocation>
</comment>
<comment type="similarity">
    <text evidence="1">Belongs to the PsbK family.</text>
</comment>
<feature type="propeptide" id="PRO_0000432463" evidence="1">
    <location>
        <begin position="1"/>
        <end position="24"/>
    </location>
</feature>
<feature type="chain" id="PRO_0000029534" description="Photosystem II reaction center protein K" evidence="1">
    <location>
        <begin position="25"/>
        <end position="61"/>
    </location>
</feature>
<feature type="transmembrane region" description="Helical" evidence="1">
    <location>
        <begin position="32"/>
        <end position="52"/>
    </location>
</feature>
<keyword id="KW-0150">Chloroplast</keyword>
<keyword id="KW-0472">Membrane</keyword>
<keyword id="KW-0602">Photosynthesis</keyword>
<keyword id="KW-0604">Photosystem II</keyword>
<keyword id="KW-0934">Plastid</keyword>
<keyword id="KW-0674">Reaction center</keyword>
<keyword id="KW-1185">Reference proteome</keyword>
<keyword id="KW-0793">Thylakoid</keyword>
<keyword id="KW-0812">Transmembrane</keyword>
<keyword id="KW-1133">Transmembrane helix</keyword>
<organism>
    <name type="scientific">Triticum aestivum</name>
    <name type="common">Wheat</name>
    <dbReference type="NCBI Taxonomy" id="4565"/>
    <lineage>
        <taxon>Eukaryota</taxon>
        <taxon>Viridiplantae</taxon>
        <taxon>Streptophyta</taxon>
        <taxon>Embryophyta</taxon>
        <taxon>Tracheophyta</taxon>
        <taxon>Spermatophyta</taxon>
        <taxon>Magnoliopsida</taxon>
        <taxon>Liliopsida</taxon>
        <taxon>Poales</taxon>
        <taxon>Poaceae</taxon>
        <taxon>BOP clade</taxon>
        <taxon>Pooideae</taxon>
        <taxon>Triticodae</taxon>
        <taxon>Triticeae</taxon>
        <taxon>Triticinae</taxon>
        <taxon>Triticum</taxon>
    </lineage>
</organism>